<evidence type="ECO:0000255" key="1">
    <source>
        <dbReference type="HAMAP-Rule" id="MF_01161"/>
    </source>
</evidence>
<feature type="chain" id="PRO_0000181669" description="tRNA(Ile)-lysidine synthase">
    <location>
        <begin position="1"/>
        <end position="321"/>
    </location>
</feature>
<feature type="binding site" evidence="1">
    <location>
        <begin position="21"/>
        <end position="26"/>
    </location>
    <ligand>
        <name>ATP</name>
        <dbReference type="ChEBI" id="CHEBI:30616"/>
    </ligand>
</feature>
<dbReference type="EC" id="6.3.4.19" evidence="1"/>
<dbReference type="EMBL" id="AL111168">
    <property type="protein sequence ID" value="CAL35561.1"/>
    <property type="molecule type" value="Genomic_DNA"/>
</dbReference>
<dbReference type="PIR" id="D81291">
    <property type="entry name" value="D81291"/>
</dbReference>
<dbReference type="RefSeq" id="WP_002851521.1">
    <property type="nucleotide sequence ID" value="NZ_SZUC01000003.1"/>
</dbReference>
<dbReference type="RefSeq" id="YP_002344835.1">
    <property type="nucleotide sequence ID" value="NC_002163.1"/>
</dbReference>
<dbReference type="SMR" id="Q9PMK7"/>
<dbReference type="IntAct" id="Q9PMK7">
    <property type="interactions" value="50"/>
</dbReference>
<dbReference type="STRING" id="192222.Cj1453c"/>
<dbReference type="PaxDb" id="192222-Cj1453c"/>
<dbReference type="DNASU" id="905741"/>
<dbReference type="EnsemblBacteria" id="CAL35561">
    <property type="protein sequence ID" value="CAL35561"/>
    <property type="gene ID" value="Cj1453c"/>
</dbReference>
<dbReference type="GeneID" id="905741"/>
<dbReference type="KEGG" id="cje:Cj1453c"/>
<dbReference type="PATRIC" id="fig|192222.6.peg.1433"/>
<dbReference type="eggNOG" id="COG0037">
    <property type="taxonomic scope" value="Bacteria"/>
</dbReference>
<dbReference type="HOGENOM" id="CLU_053500_0_0_7"/>
<dbReference type="OrthoDB" id="5289653at2"/>
<dbReference type="Proteomes" id="UP000000799">
    <property type="component" value="Chromosome"/>
</dbReference>
<dbReference type="GO" id="GO:0005737">
    <property type="term" value="C:cytoplasm"/>
    <property type="evidence" value="ECO:0007669"/>
    <property type="project" value="UniProtKB-SubCell"/>
</dbReference>
<dbReference type="GO" id="GO:0005524">
    <property type="term" value="F:ATP binding"/>
    <property type="evidence" value="ECO:0007669"/>
    <property type="project" value="UniProtKB-KW"/>
</dbReference>
<dbReference type="GO" id="GO:0032267">
    <property type="term" value="F:tRNA(Ile)-lysidine synthase activity"/>
    <property type="evidence" value="ECO:0007669"/>
    <property type="project" value="UniProtKB-EC"/>
</dbReference>
<dbReference type="GO" id="GO:0006400">
    <property type="term" value="P:tRNA modification"/>
    <property type="evidence" value="ECO:0007669"/>
    <property type="project" value="UniProtKB-UniRule"/>
</dbReference>
<dbReference type="CDD" id="cd01992">
    <property type="entry name" value="TilS_N"/>
    <property type="match status" value="1"/>
</dbReference>
<dbReference type="Gene3D" id="3.40.50.620">
    <property type="entry name" value="HUPs"/>
    <property type="match status" value="1"/>
</dbReference>
<dbReference type="HAMAP" id="MF_01161">
    <property type="entry name" value="tRNA_Ile_lys_synt"/>
    <property type="match status" value="1"/>
</dbReference>
<dbReference type="InterPro" id="IPR014729">
    <property type="entry name" value="Rossmann-like_a/b/a_fold"/>
</dbReference>
<dbReference type="InterPro" id="IPR011063">
    <property type="entry name" value="TilS/TtcA_N"/>
</dbReference>
<dbReference type="InterPro" id="IPR012094">
    <property type="entry name" value="tRNA_Ile_lys_synt"/>
</dbReference>
<dbReference type="InterPro" id="IPR012795">
    <property type="entry name" value="tRNA_Ile_lys_synt_N"/>
</dbReference>
<dbReference type="NCBIfam" id="TIGR02432">
    <property type="entry name" value="lysidine_TilS_N"/>
    <property type="match status" value="1"/>
</dbReference>
<dbReference type="PANTHER" id="PTHR43033">
    <property type="entry name" value="TRNA(ILE)-LYSIDINE SYNTHASE-RELATED"/>
    <property type="match status" value="1"/>
</dbReference>
<dbReference type="PANTHER" id="PTHR43033:SF1">
    <property type="entry name" value="TRNA(ILE)-LYSIDINE SYNTHASE-RELATED"/>
    <property type="match status" value="1"/>
</dbReference>
<dbReference type="Pfam" id="PF01171">
    <property type="entry name" value="ATP_bind_3"/>
    <property type="match status" value="1"/>
</dbReference>
<dbReference type="SUPFAM" id="SSF52402">
    <property type="entry name" value="Adenine nucleotide alpha hydrolases-like"/>
    <property type="match status" value="1"/>
</dbReference>
<organism>
    <name type="scientific">Campylobacter jejuni subsp. jejuni serotype O:2 (strain ATCC 700819 / NCTC 11168)</name>
    <dbReference type="NCBI Taxonomy" id="192222"/>
    <lineage>
        <taxon>Bacteria</taxon>
        <taxon>Pseudomonadati</taxon>
        <taxon>Campylobacterota</taxon>
        <taxon>Epsilonproteobacteria</taxon>
        <taxon>Campylobacterales</taxon>
        <taxon>Campylobacteraceae</taxon>
        <taxon>Campylobacter</taxon>
    </lineage>
</organism>
<proteinExistence type="inferred from homology"/>
<gene>
    <name evidence="1" type="primary">tilS</name>
    <name type="ordered locus">Cj1453c</name>
</gene>
<keyword id="KW-0067">ATP-binding</keyword>
<keyword id="KW-0963">Cytoplasm</keyword>
<keyword id="KW-0436">Ligase</keyword>
<keyword id="KW-0547">Nucleotide-binding</keyword>
<keyword id="KW-1185">Reference proteome</keyword>
<keyword id="KW-0819">tRNA processing</keyword>
<protein>
    <recommendedName>
        <fullName evidence="1">tRNA(Ile)-lysidine synthase</fullName>
        <ecNumber evidence="1">6.3.4.19</ecNumber>
    </recommendedName>
    <alternativeName>
        <fullName evidence="1">tRNA(Ile)-2-lysyl-cytidine synthase</fullName>
    </alternativeName>
    <alternativeName>
        <fullName evidence="1">tRNA(Ile)-lysidine synthetase</fullName>
    </alternativeName>
</protein>
<reference key="1">
    <citation type="journal article" date="2000" name="Nature">
        <title>The genome sequence of the food-borne pathogen Campylobacter jejuni reveals hypervariable sequences.</title>
        <authorList>
            <person name="Parkhill J."/>
            <person name="Wren B.W."/>
            <person name="Mungall K.L."/>
            <person name="Ketley J.M."/>
            <person name="Churcher C.M."/>
            <person name="Basham D."/>
            <person name="Chillingworth T."/>
            <person name="Davies R.M."/>
            <person name="Feltwell T."/>
            <person name="Holroyd S."/>
            <person name="Jagels K."/>
            <person name="Karlyshev A.V."/>
            <person name="Moule S."/>
            <person name="Pallen M.J."/>
            <person name="Penn C.W."/>
            <person name="Quail M.A."/>
            <person name="Rajandream M.A."/>
            <person name="Rutherford K.M."/>
            <person name="van Vliet A.H.M."/>
            <person name="Whitehead S."/>
            <person name="Barrell B.G."/>
        </authorList>
    </citation>
    <scope>NUCLEOTIDE SEQUENCE [LARGE SCALE GENOMIC DNA]</scope>
    <source>
        <strain>ATCC 700819 / NCTC 11168</strain>
    </source>
</reference>
<name>TILS_CAMJE</name>
<sequence length="321" mass="38014">MQIKDEILSLLKRGKNLLAFSYGSDSSVLFYLLMQEKIDFDLVMINYKTRKNSDLEELKAKELALKFHKKIFIKHAPKFQSNFEKKARDFRYDFFEKICLEQGYDHLILAHHLNDQFEWFLMQLSRGAGLAEILGMQECEKRSNYTLLRPLLFISKDEISSFLKEKDIFYFHDESNENEKYFRNYIRKNFSNAFVSEFHQGLKRSFSYLDEDRKKLYDFENIKEIQGLLICPKNESLIARAVKMKGLLLSTAQRKELLKGDCVLGGKIALAYKNEQAIVFEYETCQKLPKNFKEECRIAKIPRLLRAYLYNHKIDISSLSF</sequence>
<comment type="function">
    <text evidence="1">Ligates lysine onto the cytidine present at position 34 of the AUA codon-specific tRNA(Ile) that contains the anticodon CAU, in an ATP-dependent manner. Cytidine is converted to lysidine, thus changing the amino acid specificity of the tRNA from methionine to isoleucine.</text>
</comment>
<comment type="catalytic activity">
    <reaction evidence="1">
        <text>cytidine(34) in tRNA(Ile2) + L-lysine + ATP = lysidine(34) in tRNA(Ile2) + AMP + diphosphate + H(+)</text>
        <dbReference type="Rhea" id="RHEA:43744"/>
        <dbReference type="Rhea" id="RHEA-COMP:10625"/>
        <dbReference type="Rhea" id="RHEA-COMP:10670"/>
        <dbReference type="ChEBI" id="CHEBI:15378"/>
        <dbReference type="ChEBI" id="CHEBI:30616"/>
        <dbReference type="ChEBI" id="CHEBI:32551"/>
        <dbReference type="ChEBI" id="CHEBI:33019"/>
        <dbReference type="ChEBI" id="CHEBI:82748"/>
        <dbReference type="ChEBI" id="CHEBI:83665"/>
        <dbReference type="ChEBI" id="CHEBI:456215"/>
        <dbReference type="EC" id="6.3.4.19"/>
    </reaction>
</comment>
<comment type="subcellular location">
    <subcellularLocation>
        <location evidence="1">Cytoplasm</location>
    </subcellularLocation>
</comment>
<comment type="domain">
    <text>The N-terminal region contains the highly conserved SGGXDS motif, predicted to be a P-loop motif involved in ATP binding.</text>
</comment>
<comment type="similarity">
    <text evidence="1">Belongs to the tRNA(Ile)-lysidine synthase family.</text>
</comment>
<accession>Q9PMK7</accession>
<accession>Q0P8G2</accession>